<protein>
    <recommendedName>
        <fullName>Interleukin-10</fullName>
        <shortName>IL-10</shortName>
    </recommendedName>
    <alternativeName>
        <fullName>Cytokine synthesis inhibitory factor</fullName>
        <shortName>CSIF</shortName>
    </alternativeName>
</protein>
<comment type="function">
    <text evidence="2 3">Major immune regulatory cytokine that acts on many cells of the immune system where it has profound anti-inflammatory functions, limiting excessive tissue disruption caused by inflammation. Mechanistically, IL10 binds to its heterotetrameric receptor comprising IL10RA and IL10RB leading to JAK1 and STAT2-mediated phosphorylation of STAT3. In turn, STAT3 translocates to the nucleus where it drives expression of anti-inflammatory mediators. Targets antigen-presenting cells (APCs) such as macrophages and monocytes and inhibits their release of pro-inflammatory cytokines including granulocyte-macrophage colony-stimulating factor /GM-CSF, granulocyte colony-stimulating factor/G-CSF, IL-1 alpha, IL-1 beta, IL-6, IL-8 and TNF-alpha. Also interferes with antigen presentation by reducing the expression of MHC-class II and co-stimulatory molecules, thereby inhibiting their ability to induce T cell activation (By similarity). In addition, controls the inflammatory response of macrophages by reprogramming essential metabolic pathways including mTOR signaling (By similarity).</text>
</comment>
<comment type="subunit">
    <text evidence="3">Homodimer. Interacts with IL10RA and IL10RB.</text>
</comment>
<comment type="subcellular location">
    <subcellularLocation>
        <location evidence="3">Secreted</location>
    </subcellularLocation>
</comment>
<comment type="similarity">
    <text evidence="5">Belongs to the IL-10 family.</text>
</comment>
<feature type="signal peptide" evidence="4">
    <location>
        <begin position="1"/>
        <end position="19"/>
    </location>
</feature>
<feature type="chain" id="PRO_0000015373" description="Interleukin-10">
    <location>
        <begin position="20"/>
        <end position="177"/>
    </location>
</feature>
<feature type="glycosylation site" description="N-linked (GlcNAc...) asparagine" evidence="4">
    <location>
        <position position="135"/>
    </location>
</feature>
<feature type="disulfide bond" evidence="1">
    <location>
        <begin position="31"/>
        <end position="127"/>
    </location>
</feature>
<feature type="disulfide bond" evidence="1">
    <location>
        <begin position="81"/>
        <end position="133"/>
    </location>
</feature>
<organism>
    <name type="scientific">Ovis aries</name>
    <name type="common">Sheep</name>
    <dbReference type="NCBI Taxonomy" id="9940"/>
    <lineage>
        <taxon>Eukaryota</taxon>
        <taxon>Metazoa</taxon>
        <taxon>Chordata</taxon>
        <taxon>Craniata</taxon>
        <taxon>Vertebrata</taxon>
        <taxon>Euteleostomi</taxon>
        <taxon>Mammalia</taxon>
        <taxon>Eutheria</taxon>
        <taxon>Laurasiatheria</taxon>
        <taxon>Artiodactyla</taxon>
        <taxon>Ruminantia</taxon>
        <taxon>Pecora</taxon>
        <taxon>Bovidae</taxon>
        <taxon>Caprinae</taxon>
        <taxon>Ovis</taxon>
    </lineage>
</organism>
<sequence>MPSSSAVLCCLVFLAGVAASRDASTLSDSSCTHFPASLPHMLRDVRAAFGKVKTFFQMKDQLNSMLLTQSLLDDFKGYLGCQALSEMIQFYLEEVMPQAENHGPDIKEHVNSLGEKLKTLRLRLRRCHRFLPCENKSKAVEQVKRVFNMLQERGVYKAMSEFDIFINYIESYMTTKM</sequence>
<evidence type="ECO:0000250" key="1"/>
<evidence type="ECO:0000250" key="2">
    <source>
        <dbReference type="UniProtKB" id="P18893"/>
    </source>
</evidence>
<evidence type="ECO:0000250" key="3">
    <source>
        <dbReference type="UniProtKB" id="P22301"/>
    </source>
</evidence>
<evidence type="ECO:0000255" key="4"/>
<evidence type="ECO:0000305" key="5"/>
<accession>Q29408</accession>
<reference key="1">
    <citation type="journal article" date="1995" name="Gene">
        <title>Cloning and characterisation of an ovine interleukin-10-encoding cDNA.</title>
        <authorList>
            <person name="Martin H.M."/>
            <person name="Nash A.D."/>
            <person name="Andrews A.E."/>
        </authorList>
    </citation>
    <scope>NUCLEOTIDE SEQUENCE [MRNA]</scope>
    <source>
        <tissue>Macrophage</tissue>
    </source>
</reference>
<reference key="2">
    <citation type="journal article" date="1994" name="Gene">
        <title>Sequence of the sheep interleukin-10-encoding cDNA.</title>
        <authorList>
            <person name="Dutia B.M."/>
            <person name="Hunt P."/>
            <person name="Sargan D.R."/>
            <person name="Dalziel R.G."/>
            <person name="Hopkins J."/>
        </authorList>
    </citation>
    <scope>NUCLEOTIDE SEQUENCE [MRNA]</scope>
    <source>
        <tissue>Macrophage</tissue>
    </source>
</reference>
<name>IL10_SHEEP</name>
<gene>
    <name type="primary">IL10</name>
</gene>
<dbReference type="EMBL" id="U11421">
    <property type="protein sequence ID" value="AAC13768.1"/>
    <property type="molecule type" value="mRNA"/>
</dbReference>
<dbReference type="EMBL" id="Z29362">
    <property type="protein sequence ID" value="CAA82546.1"/>
    <property type="molecule type" value="mRNA"/>
</dbReference>
<dbReference type="RefSeq" id="NP_001009327.1">
    <property type="nucleotide sequence ID" value="NM_001009327.1"/>
</dbReference>
<dbReference type="SMR" id="Q29408"/>
<dbReference type="STRING" id="9940.ENSOARP00000006744"/>
<dbReference type="GlyCosmos" id="Q29408">
    <property type="glycosylation" value="1 site, No reported glycans"/>
</dbReference>
<dbReference type="PaxDb" id="9940-ENSOARP00000006744"/>
<dbReference type="GeneID" id="443342"/>
<dbReference type="KEGG" id="oas:443342"/>
<dbReference type="CTD" id="3586"/>
<dbReference type="eggNOG" id="ENOG502S22U">
    <property type="taxonomic scope" value="Eukaryota"/>
</dbReference>
<dbReference type="OrthoDB" id="9931894at2759"/>
<dbReference type="Proteomes" id="UP000002356">
    <property type="component" value="Unplaced"/>
</dbReference>
<dbReference type="GO" id="GO:0005576">
    <property type="term" value="C:extracellular region"/>
    <property type="evidence" value="ECO:0000303"/>
    <property type="project" value="UniProtKB"/>
</dbReference>
<dbReference type="GO" id="GO:0005615">
    <property type="term" value="C:extracellular space"/>
    <property type="evidence" value="ECO:0000314"/>
    <property type="project" value="AgBase"/>
</dbReference>
<dbReference type="GO" id="GO:0005125">
    <property type="term" value="F:cytokine activity"/>
    <property type="evidence" value="ECO:0007669"/>
    <property type="project" value="UniProtKB-KW"/>
</dbReference>
<dbReference type="GO" id="GO:0005141">
    <property type="term" value="F:interleukin-10 receptor binding"/>
    <property type="evidence" value="ECO:0000303"/>
    <property type="project" value="UniProtKB"/>
</dbReference>
<dbReference type="GO" id="GO:0006955">
    <property type="term" value="P:immune response"/>
    <property type="evidence" value="ECO:0007669"/>
    <property type="project" value="InterPro"/>
</dbReference>
<dbReference type="GO" id="GO:0030889">
    <property type="term" value="P:negative regulation of B cell proliferation"/>
    <property type="evidence" value="ECO:0000250"/>
    <property type="project" value="UniProtKB"/>
</dbReference>
<dbReference type="GO" id="GO:0002719">
    <property type="term" value="P:negative regulation of cytokine production involved in immune response"/>
    <property type="evidence" value="ECO:0000250"/>
    <property type="project" value="UniProtKB"/>
</dbReference>
<dbReference type="GO" id="GO:0050728">
    <property type="term" value="P:negative regulation of inflammatory response"/>
    <property type="evidence" value="ECO:0000250"/>
    <property type="project" value="UniProtKB"/>
</dbReference>
<dbReference type="GO" id="GO:0032687">
    <property type="term" value="P:negative regulation of interferon-alpha production"/>
    <property type="evidence" value="ECO:0000314"/>
    <property type="project" value="AgBase"/>
</dbReference>
<dbReference type="GO" id="GO:0032715">
    <property type="term" value="P:negative regulation of interleukin-6 production"/>
    <property type="evidence" value="ECO:0000250"/>
    <property type="project" value="UniProtKB"/>
</dbReference>
<dbReference type="GO" id="GO:0051045">
    <property type="term" value="P:negative regulation of membrane protein ectodomain proteolysis"/>
    <property type="evidence" value="ECO:0000250"/>
    <property type="project" value="UniProtKB"/>
</dbReference>
<dbReference type="GO" id="GO:0002904">
    <property type="term" value="P:positive regulation of B cell apoptotic process"/>
    <property type="evidence" value="ECO:0000250"/>
    <property type="project" value="UniProtKB"/>
</dbReference>
<dbReference type="GO" id="GO:0001819">
    <property type="term" value="P:positive regulation of cytokine production"/>
    <property type="evidence" value="ECO:0000250"/>
    <property type="project" value="UniProtKB"/>
</dbReference>
<dbReference type="GO" id="GO:0051091">
    <property type="term" value="P:positive regulation of DNA-binding transcription factor activity"/>
    <property type="evidence" value="ECO:0000250"/>
    <property type="project" value="UniProtKB"/>
</dbReference>
<dbReference type="GO" id="GO:0045893">
    <property type="term" value="P:positive regulation of DNA-templated transcription"/>
    <property type="evidence" value="ECO:0000250"/>
    <property type="project" value="UniProtKB"/>
</dbReference>
<dbReference type="GO" id="GO:0051384">
    <property type="term" value="P:response to glucocorticoid"/>
    <property type="evidence" value="ECO:0000250"/>
    <property type="project" value="UniProtKB"/>
</dbReference>
<dbReference type="GO" id="GO:0002237">
    <property type="term" value="P:response to molecule of bacterial origin"/>
    <property type="evidence" value="ECO:0000250"/>
    <property type="project" value="UniProtKB"/>
</dbReference>
<dbReference type="FunFam" id="1.20.1250.10:FF:000011">
    <property type="entry name" value="Interleukin-10"/>
    <property type="match status" value="1"/>
</dbReference>
<dbReference type="Gene3D" id="1.20.1250.10">
    <property type="match status" value="1"/>
</dbReference>
<dbReference type="InterPro" id="IPR009079">
    <property type="entry name" value="4_helix_cytokine-like_core"/>
</dbReference>
<dbReference type="InterPro" id="IPR000098">
    <property type="entry name" value="IL-10"/>
</dbReference>
<dbReference type="InterPro" id="IPR020443">
    <property type="entry name" value="IL-10/19/20/24/26"/>
</dbReference>
<dbReference type="InterPro" id="IPR020423">
    <property type="entry name" value="IL-10_CS"/>
</dbReference>
<dbReference type="PANTHER" id="PTHR48482:SF5">
    <property type="entry name" value="INTERLEUKIN-10"/>
    <property type="match status" value="1"/>
</dbReference>
<dbReference type="PANTHER" id="PTHR48482">
    <property type="entry name" value="INTERLEUKIN-19-RELATED"/>
    <property type="match status" value="1"/>
</dbReference>
<dbReference type="Pfam" id="PF00726">
    <property type="entry name" value="IL10"/>
    <property type="match status" value="1"/>
</dbReference>
<dbReference type="PRINTS" id="PR01294">
    <property type="entry name" value="INTRLEUKIN10"/>
</dbReference>
<dbReference type="SMART" id="SM00188">
    <property type="entry name" value="IL10"/>
    <property type="match status" value="1"/>
</dbReference>
<dbReference type="SUPFAM" id="SSF47266">
    <property type="entry name" value="4-helical cytokines"/>
    <property type="match status" value="1"/>
</dbReference>
<dbReference type="PROSITE" id="PS00520">
    <property type="entry name" value="INTERLEUKIN_10"/>
    <property type="match status" value="1"/>
</dbReference>
<keyword id="KW-0202">Cytokine</keyword>
<keyword id="KW-1015">Disulfide bond</keyword>
<keyword id="KW-0325">Glycoprotein</keyword>
<keyword id="KW-1185">Reference proteome</keyword>
<keyword id="KW-0964">Secreted</keyword>
<keyword id="KW-0732">Signal</keyword>
<proteinExistence type="evidence at transcript level"/>